<keyword id="KW-0004">4Fe-4S</keyword>
<keyword id="KW-0342">GTP-binding</keyword>
<keyword id="KW-0408">Iron</keyword>
<keyword id="KW-0411">Iron-sulfur</keyword>
<keyword id="KW-0456">Lyase</keyword>
<keyword id="KW-0479">Metal-binding</keyword>
<keyword id="KW-0501">Molybdenum cofactor biosynthesis</keyword>
<keyword id="KW-0547">Nucleotide-binding</keyword>
<keyword id="KW-1185">Reference proteome</keyword>
<keyword id="KW-0949">S-adenosyl-L-methionine</keyword>
<accession>P65382</accession>
<accession>Q8X812</accession>
<protein>
    <recommendedName>
        <fullName evidence="1">GTP 3',8-cyclase</fullName>
        <ecNumber evidence="1">4.1.99.22</ecNumber>
    </recommendedName>
    <alternativeName>
        <fullName evidence="1">Molybdenum cofactor biosynthesis protein A</fullName>
    </alternativeName>
</protein>
<dbReference type="EC" id="4.1.99.22" evidence="1"/>
<dbReference type="EMBL" id="AE014075">
    <property type="protein sequence ID" value="AAN79335.1"/>
    <property type="status" value="ALT_INIT"/>
    <property type="molecule type" value="Genomic_DNA"/>
</dbReference>
<dbReference type="RefSeq" id="WP_001295301.1">
    <property type="nucleotide sequence ID" value="NZ_CP051263.1"/>
</dbReference>
<dbReference type="SMR" id="P65382"/>
<dbReference type="STRING" id="199310.c0862"/>
<dbReference type="GeneID" id="86863291"/>
<dbReference type="KEGG" id="ecc:c0862"/>
<dbReference type="eggNOG" id="COG2896">
    <property type="taxonomic scope" value="Bacteria"/>
</dbReference>
<dbReference type="HOGENOM" id="CLU_009273_0_1_6"/>
<dbReference type="UniPathway" id="UPA00344"/>
<dbReference type="Proteomes" id="UP000001410">
    <property type="component" value="Chromosome"/>
</dbReference>
<dbReference type="GO" id="GO:0051539">
    <property type="term" value="F:4 iron, 4 sulfur cluster binding"/>
    <property type="evidence" value="ECO:0007669"/>
    <property type="project" value="UniProtKB-UniRule"/>
</dbReference>
<dbReference type="GO" id="GO:0061799">
    <property type="term" value="F:cyclic pyranopterin monophosphate synthase activity"/>
    <property type="evidence" value="ECO:0007669"/>
    <property type="project" value="TreeGrafter"/>
</dbReference>
<dbReference type="GO" id="GO:0061798">
    <property type="term" value="F:GTP 3',8'-cyclase activity"/>
    <property type="evidence" value="ECO:0007669"/>
    <property type="project" value="UniProtKB-UniRule"/>
</dbReference>
<dbReference type="GO" id="GO:0005525">
    <property type="term" value="F:GTP binding"/>
    <property type="evidence" value="ECO:0007669"/>
    <property type="project" value="UniProtKB-UniRule"/>
</dbReference>
<dbReference type="GO" id="GO:0046872">
    <property type="term" value="F:metal ion binding"/>
    <property type="evidence" value="ECO:0007669"/>
    <property type="project" value="UniProtKB-KW"/>
</dbReference>
<dbReference type="GO" id="GO:1904047">
    <property type="term" value="F:S-adenosyl-L-methionine binding"/>
    <property type="evidence" value="ECO:0007669"/>
    <property type="project" value="UniProtKB-UniRule"/>
</dbReference>
<dbReference type="GO" id="GO:0006777">
    <property type="term" value="P:Mo-molybdopterin cofactor biosynthetic process"/>
    <property type="evidence" value="ECO:0007669"/>
    <property type="project" value="UniProtKB-UniRule"/>
</dbReference>
<dbReference type="CDD" id="cd01335">
    <property type="entry name" value="Radical_SAM"/>
    <property type="match status" value="1"/>
</dbReference>
<dbReference type="CDD" id="cd21117">
    <property type="entry name" value="Twitch_MoaA"/>
    <property type="match status" value="1"/>
</dbReference>
<dbReference type="FunFam" id="3.20.20.70:FF:000057">
    <property type="entry name" value="GTP 3',8-cyclase"/>
    <property type="match status" value="1"/>
</dbReference>
<dbReference type="Gene3D" id="3.20.20.70">
    <property type="entry name" value="Aldolase class I"/>
    <property type="match status" value="1"/>
</dbReference>
<dbReference type="HAMAP" id="MF_01225_B">
    <property type="entry name" value="MoaA_B"/>
    <property type="match status" value="1"/>
</dbReference>
<dbReference type="InterPro" id="IPR013785">
    <property type="entry name" value="Aldolase_TIM"/>
</dbReference>
<dbReference type="InterPro" id="IPR006638">
    <property type="entry name" value="Elp3/MiaA/NifB-like_rSAM"/>
</dbReference>
<dbReference type="InterPro" id="IPR013483">
    <property type="entry name" value="MoaA"/>
</dbReference>
<dbReference type="InterPro" id="IPR000385">
    <property type="entry name" value="MoaA_NifB_PqqE_Fe-S-bd_CS"/>
</dbReference>
<dbReference type="InterPro" id="IPR010505">
    <property type="entry name" value="MoaA_twitch"/>
</dbReference>
<dbReference type="InterPro" id="IPR050105">
    <property type="entry name" value="MoCo_biosynth_MoaA/MoaC"/>
</dbReference>
<dbReference type="InterPro" id="IPR007197">
    <property type="entry name" value="rSAM"/>
</dbReference>
<dbReference type="NCBIfam" id="TIGR02666">
    <property type="entry name" value="moaA"/>
    <property type="match status" value="1"/>
</dbReference>
<dbReference type="PANTHER" id="PTHR22960:SF28">
    <property type="entry name" value="GTP 3',8-CYCLASE"/>
    <property type="match status" value="1"/>
</dbReference>
<dbReference type="PANTHER" id="PTHR22960">
    <property type="entry name" value="MOLYBDOPTERIN COFACTOR SYNTHESIS PROTEIN A"/>
    <property type="match status" value="1"/>
</dbReference>
<dbReference type="Pfam" id="PF13353">
    <property type="entry name" value="Fer4_12"/>
    <property type="match status" value="1"/>
</dbReference>
<dbReference type="Pfam" id="PF06463">
    <property type="entry name" value="Mob_synth_C"/>
    <property type="match status" value="1"/>
</dbReference>
<dbReference type="Pfam" id="PF04055">
    <property type="entry name" value="Radical_SAM"/>
    <property type="match status" value="1"/>
</dbReference>
<dbReference type="SFLD" id="SFLDG01383">
    <property type="entry name" value="cyclic_pyranopterin_phosphate"/>
    <property type="match status" value="1"/>
</dbReference>
<dbReference type="SFLD" id="SFLDG01072">
    <property type="entry name" value="dehydrogenase_like"/>
    <property type="match status" value="1"/>
</dbReference>
<dbReference type="SMART" id="SM00729">
    <property type="entry name" value="Elp3"/>
    <property type="match status" value="1"/>
</dbReference>
<dbReference type="SUPFAM" id="SSF102114">
    <property type="entry name" value="Radical SAM enzymes"/>
    <property type="match status" value="1"/>
</dbReference>
<dbReference type="PROSITE" id="PS01305">
    <property type="entry name" value="MOAA_NIFB_PQQE"/>
    <property type="match status" value="1"/>
</dbReference>
<dbReference type="PROSITE" id="PS51918">
    <property type="entry name" value="RADICAL_SAM"/>
    <property type="match status" value="1"/>
</dbReference>
<reference key="1">
    <citation type="journal article" date="2002" name="Proc. Natl. Acad. Sci. U.S.A.">
        <title>Extensive mosaic structure revealed by the complete genome sequence of uropathogenic Escherichia coli.</title>
        <authorList>
            <person name="Welch R.A."/>
            <person name="Burland V."/>
            <person name="Plunkett G. III"/>
            <person name="Redford P."/>
            <person name="Roesch P."/>
            <person name="Rasko D."/>
            <person name="Buckles E.L."/>
            <person name="Liou S.-R."/>
            <person name="Boutin A."/>
            <person name="Hackett J."/>
            <person name="Stroud D."/>
            <person name="Mayhew G.F."/>
            <person name="Rose D.J."/>
            <person name="Zhou S."/>
            <person name="Schwartz D.C."/>
            <person name="Perna N.T."/>
            <person name="Mobley H.L.T."/>
            <person name="Donnenberg M.S."/>
            <person name="Blattner F.R."/>
        </authorList>
    </citation>
    <scope>NUCLEOTIDE SEQUENCE [LARGE SCALE GENOMIC DNA]</scope>
    <source>
        <strain>CFT073 / ATCC 700928 / UPEC</strain>
    </source>
</reference>
<sequence length="329" mass="37304">MASQLTDAFARKFYYLRLSITDVCNFRCTYCLPDGYKPSGVTNKGFLTVDEIRRVTRAFASLGTEKVRLTGGEPSLRRDFTDIIAAVRENDAIRQIAVTTNGYRLERDVANWRDAGLTGINVSVDSLDARQFHAITGQDKFNQVMAGIDAAFEAGFEKVKVNTVLMRDVNHHQLDTFLNWIQHRPIQLRFIELMETGEGSELFRKHHISGQVLRDELLRRGWIHQLRQRSDGPAQVFCHPDYAGEIGLIMPYEKDFCATCNRLRVSSIGKLHLCLFGEGGVNLRDLLEDDTQQQALEARISAALREKKQTHFLHQNNTGITQNLSYIGG</sequence>
<proteinExistence type="inferred from homology"/>
<feature type="chain" id="PRO_0000152959" description="GTP 3',8-cyclase">
    <location>
        <begin position="1"/>
        <end position="329"/>
    </location>
</feature>
<feature type="domain" description="Radical SAM core" evidence="2">
    <location>
        <begin position="8"/>
        <end position="234"/>
    </location>
</feature>
<feature type="binding site" evidence="1">
    <location>
        <position position="17"/>
    </location>
    <ligand>
        <name>GTP</name>
        <dbReference type="ChEBI" id="CHEBI:37565"/>
    </ligand>
</feature>
<feature type="binding site" evidence="1">
    <location>
        <position position="24"/>
    </location>
    <ligand>
        <name>[4Fe-4S] cluster</name>
        <dbReference type="ChEBI" id="CHEBI:49883"/>
        <label>1</label>
        <note>4Fe-4S-S-AdoMet</note>
    </ligand>
</feature>
<feature type="binding site" evidence="1">
    <location>
        <position position="28"/>
    </location>
    <ligand>
        <name>[4Fe-4S] cluster</name>
        <dbReference type="ChEBI" id="CHEBI:49883"/>
        <label>1</label>
        <note>4Fe-4S-S-AdoMet</note>
    </ligand>
</feature>
<feature type="binding site" evidence="1">
    <location>
        <position position="30"/>
    </location>
    <ligand>
        <name>S-adenosyl-L-methionine</name>
        <dbReference type="ChEBI" id="CHEBI:59789"/>
    </ligand>
</feature>
<feature type="binding site" evidence="1">
    <location>
        <position position="31"/>
    </location>
    <ligand>
        <name>[4Fe-4S] cluster</name>
        <dbReference type="ChEBI" id="CHEBI:49883"/>
        <label>1</label>
        <note>4Fe-4S-S-AdoMet</note>
    </ligand>
</feature>
<feature type="binding site" evidence="1">
    <location>
        <position position="68"/>
    </location>
    <ligand>
        <name>GTP</name>
        <dbReference type="ChEBI" id="CHEBI:37565"/>
    </ligand>
</feature>
<feature type="binding site" evidence="1">
    <location>
        <position position="72"/>
    </location>
    <ligand>
        <name>S-adenosyl-L-methionine</name>
        <dbReference type="ChEBI" id="CHEBI:59789"/>
    </ligand>
</feature>
<feature type="binding site" evidence="1">
    <location>
        <position position="99"/>
    </location>
    <ligand>
        <name>GTP</name>
        <dbReference type="ChEBI" id="CHEBI:37565"/>
    </ligand>
</feature>
<feature type="binding site" evidence="1">
    <location>
        <position position="123"/>
    </location>
    <ligand>
        <name>S-adenosyl-L-methionine</name>
        <dbReference type="ChEBI" id="CHEBI:59789"/>
    </ligand>
</feature>
<feature type="binding site" evidence="1">
    <location>
        <position position="160"/>
    </location>
    <ligand>
        <name>GTP</name>
        <dbReference type="ChEBI" id="CHEBI:37565"/>
    </ligand>
</feature>
<feature type="binding site" evidence="1">
    <location>
        <position position="194"/>
    </location>
    <ligand>
        <name>S-adenosyl-L-methionine</name>
        <dbReference type="ChEBI" id="CHEBI:59789"/>
    </ligand>
</feature>
<feature type="binding site" evidence="1">
    <location>
        <position position="257"/>
    </location>
    <ligand>
        <name>[4Fe-4S] cluster</name>
        <dbReference type="ChEBI" id="CHEBI:49883"/>
        <label>2</label>
        <note>4Fe-4S-substrate</note>
    </ligand>
</feature>
<feature type="binding site" evidence="1">
    <location>
        <position position="260"/>
    </location>
    <ligand>
        <name>[4Fe-4S] cluster</name>
        <dbReference type="ChEBI" id="CHEBI:49883"/>
        <label>2</label>
        <note>4Fe-4S-substrate</note>
    </ligand>
</feature>
<feature type="binding site" evidence="1">
    <location>
        <begin position="262"/>
        <end position="264"/>
    </location>
    <ligand>
        <name>GTP</name>
        <dbReference type="ChEBI" id="CHEBI:37565"/>
    </ligand>
</feature>
<feature type="binding site" evidence="1">
    <location>
        <position position="274"/>
    </location>
    <ligand>
        <name>[4Fe-4S] cluster</name>
        <dbReference type="ChEBI" id="CHEBI:49883"/>
        <label>2</label>
        <note>4Fe-4S-substrate</note>
    </ligand>
</feature>
<gene>
    <name evidence="1" type="primary">moaA</name>
    <name type="ordered locus">c0862</name>
</gene>
<organism>
    <name type="scientific">Escherichia coli O6:H1 (strain CFT073 / ATCC 700928 / UPEC)</name>
    <dbReference type="NCBI Taxonomy" id="199310"/>
    <lineage>
        <taxon>Bacteria</taxon>
        <taxon>Pseudomonadati</taxon>
        <taxon>Pseudomonadota</taxon>
        <taxon>Gammaproteobacteria</taxon>
        <taxon>Enterobacterales</taxon>
        <taxon>Enterobacteriaceae</taxon>
        <taxon>Escherichia</taxon>
    </lineage>
</organism>
<name>MOAA_ECOL6</name>
<comment type="function">
    <text evidence="1">Catalyzes the cyclization of GTP to (8S)-3',8-cyclo-7,8-dihydroguanosine 5'-triphosphate.</text>
</comment>
<comment type="catalytic activity">
    <reaction evidence="1">
        <text>GTP + AH2 + S-adenosyl-L-methionine = (8S)-3',8-cyclo-7,8-dihydroguanosine 5'-triphosphate + 5'-deoxyadenosine + L-methionine + A + H(+)</text>
        <dbReference type="Rhea" id="RHEA:49576"/>
        <dbReference type="ChEBI" id="CHEBI:13193"/>
        <dbReference type="ChEBI" id="CHEBI:15378"/>
        <dbReference type="ChEBI" id="CHEBI:17319"/>
        <dbReference type="ChEBI" id="CHEBI:17499"/>
        <dbReference type="ChEBI" id="CHEBI:37565"/>
        <dbReference type="ChEBI" id="CHEBI:57844"/>
        <dbReference type="ChEBI" id="CHEBI:59789"/>
        <dbReference type="ChEBI" id="CHEBI:131766"/>
        <dbReference type="EC" id="4.1.99.22"/>
    </reaction>
</comment>
<comment type="cofactor">
    <cofactor evidence="1">
        <name>[4Fe-4S] cluster</name>
        <dbReference type="ChEBI" id="CHEBI:49883"/>
    </cofactor>
    <text evidence="1">Binds 2 [4Fe-4S] clusters. Binds 1 [4Fe-4S] cluster coordinated with 3 cysteines and an exchangeable S-adenosyl-L-methionine and 1 [4Fe-4S] cluster coordinated with 3 cysteines and the GTP-derived substrate.</text>
</comment>
<comment type="pathway">
    <text evidence="1">Cofactor biosynthesis; molybdopterin biosynthesis.</text>
</comment>
<comment type="subunit">
    <text evidence="1">Monomer and homodimer.</text>
</comment>
<comment type="similarity">
    <text evidence="1">Belongs to the radical SAM superfamily. MoaA family.</text>
</comment>
<comment type="sequence caution" evidence="3">
    <conflict type="erroneous initiation">
        <sequence resource="EMBL-CDS" id="AAN79335"/>
    </conflict>
</comment>
<evidence type="ECO:0000255" key="1">
    <source>
        <dbReference type="HAMAP-Rule" id="MF_01225"/>
    </source>
</evidence>
<evidence type="ECO:0000255" key="2">
    <source>
        <dbReference type="PROSITE-ProRule" id="PRU01266"/>
    </source>
</evidence>
<evidence type="ECO:0000305" key="3"/>